<proteinExistence type="inferred from homology"/>
<reference key="1">
    <citation type="submission" date="2009-03" db="EMBL/GenBank/DDBJ databases">
        <title>Brucella melitensis ATCC 23457 whole genome shotgun sequencing project.</title>
        <authorList>
            <person name="Setubal J.C."/>
            <person name="Boyle S."/>
            <person name="Crasta O.R."/>
            <person name="Gillespie J.J."/>
            <person name="Kenyon R.W."/>
            <person name="Lu J."/>
            <person name="Mane S."/>
            <person name="Nagrani S."/>
            <person name="Shallom J.M."/>
            <person name="Shallom S."/>
            <person name="Shukla M."/>
            <person name="Snyder E.E."/>
            <person name="Sobral B.W."/>
            <person name="Wattam A.R."/>
            <person name="Will R."/>
            <person name="Williams K."/>
            <person name="Yoo H."/>
            <person name="Munk C."/>
            <person name="Tapia R."/>
            <person name="Han C."/>
            <person name="Detter J.C."/>
            <person name="Bruce D."/>
            <person name="Brettin T.S."/>
        </authorList>
    </citation>
    <scope>NUCLEOTIDE SEQUENCE [LARGE SCALE GENOMIC DNA]</scope>
    <source>
        <strain>ATCC 23457</strain>
    </source>
</reference>
<name>NRDI_BRUMB</name>
<evidence type="ECO:0000255" key="1">
    <source>
        <dbReference type="HAMAP-Rule" id="MF_00128"/>
    </source>
</evidence>
<protein>
    <recommendedName>
        <fullName evidence="1">Protein NrdI</fullName>
    </recommendedName>
</protein>
<accession>C0RKP1</accession>
<organism>
    <name type="scientific">Brucella melitensis biotype 2 (strain ATCC 23457)</name>
    <dbReference type="NCBI Taxonomy" id="546272"/>
    <lineage>
        <taxon>Bacteria</taxon>
        <taxon>Pseudomonadati</taxon>
        <taxon>Pseudomonadota</taxon>
        <taxon>Alphaproteobacteria</taxon>
        <taxon>Hyphomicrobiales</taxon>
        <taxon>Brucellaceae</taxon>
        <taxon>Brucella/Ochrobactrum group</taxon>
        <taxon>Brucella</taxon>
    </lineage>
</organism>
<feature type="chain" id="PRO_1000191754" description="Protein NrdI">
    <location>
        <begin position="1"/>
        <end position="135"/>
    </location>
</feature>
<sequence length="135" mass="14656">MSLIVYFSSRSGNTHRFVERLGVRSSRIPLEASGALQVREPFVLVTPTYGGGSTKGAVPNPVIRFLNDADNRALIRGVIAAGNSNFGEAFCIAGNIISAKCGVPYLYRFELLGTAEDVGNVRNGMEQFWTRQTQA</sequence>
<gene>
    <name evidence="1" type="primary">nrdI</name>
    <name type="ordered locus">BMEA_B0315</name>
</gene>
<comment type="function">
    <text evidence="1">Probably involved in ribonucleotide reductase function.</text>
</comment>
<comment type="similarity">
    <text evidence="1">Belongs to the NrdI family.</text>
</comment>
<dbReference type="EMBL" id="CP001489">
    <property type="protein sequence ID" value="ACO02174.1"/>
    <property type="molecule type" value="Genomic_DNA"/>
</dbReference>
<dbReference type="RefSeq" id="WP_002966273.1">
    <property type="nucleotide sequence ID" value="NC_012442.1"/>
</dbReference>
<dbReference type="SMR" id="C0RKP1"/>
<dbReference type="GeneID" id="97535519"/>
<dbReference type="KEGG" id="bmi:BMEA_B0315"/>
<dbReference type="HOGENOM" id="CLU_114845_0_0_5"/>
<dbReference type="Proteomes" id="UP000001748">
    <property type="component" value="Chromosome II"/>
</dbReference>
<dbReference type="GO" id="GO:0010181">
    <property type="term" value="F:FMN binding"/>
    <property type="evidence" value="ECO:0007669"/>
    <property type="project" value="InterPro"/>
</dbReference>
<dbReference type="GO" id="GO:0036211">
    <property type="term" value="P:protein modification process"/>
    <property type="evidence" value="ECO:0007669"/>
    <property type="project" value="InterPro"/>
</dbReference>
<dbReference type="Gene3D" id="3.40.50.360">
    <property type="match status" value="1"/>
</dbReference>
<dbReference type="HAMAP" id="MF_00128">
    <property type="entry name" value="NrdI"/>
    <property type="match status" value="1"/>
</dbReference>
<dbReference type="InterPro" id="IPR029039">
    <property type="entry name" value="Flavoprotein-like_sf"/>
</dbReference>
<dbReference type="InterPro" id="IPR020852">
    <property type="entry name" value="RNR_Ib_NrdI_bac"/>
</dbReference>
<dbReference type="InterPro" id="IPR004465">
    <property type="entry name" value="RNR_NrdI"/>
</dbReference>
<dbReference type="NCBIfam" id="TIGR00333">
    <property type="entry name" value="nrdI"/>
    <property type="match status" value="1"/>
</dbReference>
<dbReference type="PANTHER" id="PTHR37297">
    <property type="entry name" value="PROTEIN NRDI"/>
    <property type="match status" value="1"/>
</dbReference>
<dbReference type="PANTHER" id="PTHR37297:SF1">
    <property type="entry name" value="PROTEIN NRDI"/>
    <property type="match status" value="1"/>
</dbReference>
<dbReference type="Pfam" id="PF07972">
    <property type="entry name" value="Flavodoxin_NdrI"/>
    <property type="match status" value="1"/>
</dbReference>
<dbReference type="PIRSF" id="PIRSF005087">
    <property type="entry name" value="NrdI"/>
    <property type="match status" value="1"/>
</dbReference>
<dbReference type="SUPFAM" id="SSF52218">
    <property type="entry name" value="Flavoproteins"/>
    <property type="match status" value="1"/>
</dbReference>